<evidence type="ECO:0000255" key="1">
    <source>
        <dbReference type="PROSITE-ProRule" id="PRU00703"/>
    </source>
</evidence>
<evidence type="ECO:0000305" key="2"/>
<accession>O05961</accession>
<proteinExistence type="evidence at transcript level"/>
<keyword id="KW-0129">CBS domain</keyword>
<keyword id="KW-0204">Cytolysis</keyword>
<keyword id="KW-0354">Hemolysis</keyword>
<keyword id="KW-1185">Reference proteome</keyword>
<keyword id="KW-0677">Repeat</keyword>
<keyword id="KW-0800">Toxin</keyword>
<keyword id="KW-0843">Virulence</keyword>
<comment type="induction">
    <text>Expressed at 30 minutes post-infection during the period that most rickettsiae escape from phagosomal vacuoles into the host cytosol.</text>
</comment>
<comment type="miscellaneous">
    <text>Transformation of Salmonella with tlyC results in the escape of transformants from endosomal vacuoles into the host cell cytosol.</text>
</comment>
<comment type="miscellaneous">
    <text>According to PubMed:17301007, the hemolysin protein was detected only in the virulent strain ATCC VR-142 / Breinl and not in the avirulent strain Madrid E, at their current detection limit of 10 fmol.</text>
</comment>
<comment type="similarity">
    <text evidence="2">Belongs to the UPF0053 family. Hemolysin C subfamily.</text>
</comment>
<reference key="1">
    <citation type="journal article" date="1997" name="Microbiology">
        <title>Genomic rearrangements during evolution of the obligate intracellular parasite Rickettsia prowazekii as inferred from an analysis of 52015 bp nucleotide sequence.</title>
        <authorList>
            <person name="Andersson J.O."/>
            <person name="Andersson S.G.E."/>
        </authorList>
    </citation>
    <scope>NUCLEOTIDE SEQUENCE [GENOMIC DNA]</scope>
    <source>
        <strain>Madrid E</strain>
    </source>
</reference>
<reference key="2">
    <citation type="journal article" date="1998" name="Nature">
        <title>The genome sequence of Rickettsia prowazekii and the origin of mitochondria.</title>
        <authorList>
            <person name="Andersson S.G.E."/>
            <person name="Zomorodipour A."/>
            <person name="Andersson J.O."/>
            <person name="Sicheritz-Ponten T."/>
            <person name="Alsmark U.C.M."/>
            <person name="Podowski R.M."/>
            <person name="Naeslund A.K."/>
            <person name="Eriksson A.-S."/>
            <person name="Winkler H.H."/>
            <person name="Kurland C.G."/>
        </authorList>
    </citation>
    <scope>NUCLEOTIDE SEQUENCE [LARGE SCALE GENOMIC DNA]</scope>
    <source>
        <strain>Madrid E</strain>
    </source>
</reference>
<reference key="3">
    <citation type="journal article" date="2005" name="Infect. Immun.">
        <title>Expression of the Rickettsia prowazekii pld or tlyC gene in Salmonella enterica serovar Typhimurium mediates phagosomal escape.</title>
        <authorList>
            <person name="Whitworth T."/>
            <person name="Popov V.L."/>
            <person name="Yu X.-J."/>
            <person name="Walker D.H."/>
            <person name="Bouyer D.H."/>
        </authorList>
    </citation>
    <scope>MEDIATION OF PHAGOSOMAL ESCAPE IN SALMONELLA</scope>
    <source>
        <strain>ATCC VR-142 / Breinl</strain>
    </source>
</reference>
<reference key="4">
    <citation type="journal article" date="2007" name="Biochim. Biophys. Acta">
        <title>Insight into the virulence of Rickettsia prowazekii by proteomic analysis and comparison with an avirulent strain.</title>
        <authorList>
            <person name="Chao C.C."/>
            <person name="Chelius D."/>
            <person name="Zhang T."/>
            <person name="Mutumanje E."/>
            <person name="Ching W.M."/>
        </authorList>
    </citation>
    <scope>DETECTION OF HEMOLYSIN</scope>
    <source>
        <strain>ATCC VR-142 / Breinl</strain>
        <strain>Madrid E</strain>
    </source>
</reference>
<organism>
    <name type="scientific">Rickettsia prowazekii (strain Madrid E)</name>
    <dbReference type="NCBI Taxonomy" id="272947"/>
    <lineage>
        <taxon>Bacteria</taxon>
        <taxon>Pseudomonadati</taxon>
        <taxon>Pseudomonadota</taxon>
        <taxon>Alphaproteobacteria</taxon>
        <taxon>Rickettsiales</taxon>
        <taxon>Rickettsiaceae</taxon>
        <taxon>Rickettsieae</taxon>
        <taxon>Rickettsia</taxon>
        <taxon>typhus group</taxon>
    </lineage>
</organism>
<sequence>MLKSSKHEDSSSKKNQNNKLIFIVRQLFYLIKHFFSKTKTPDNFFGIIKRLKINSQKMSLDEFNILANLLKLEDKIVEDIMVPRSDIIAIKLTTNLEELSESIKIAVPHTRTLIYDGTLDNVVGFIHIKDLFKALATKQNSPLKRLIRKHIIAAPSMKLLDLLAKMRRERTHIAIVVDEYGGTDGLVTIEDLIEEIVGRIDDEHDQQLDSANFKVINNSTIIANARIEVELLEEIIGEKLKNDDDEFDTIGGLVLTRVSSVPAIGTRIDISENIEIEVTDATPRSLKQVKIRLKNGLNSDNLT</sequence>
<protein>
    <recommendedName>
        <fullName>Hemolysin C</fullName>
    </recommendedName>
</protein>
<feature type="chain" id="PRO_0000088386" description="Hemolysin C">
    <location>
        <begin position="1"/>
        <end position="303"/>
    </location>
</feature>
<feature type="domain" description="CBS 1" evidence="1">
    <location>
        <begin position="81"/>
        <end position="143"/>
    </location>
</feature>
<feature type="domain" description="CBS 2" evidence="1">
    <location>
        <begin position="146"/>
        <end position="203"/>
    </location>
</feature>
<gene>
    <name type="primary">tlyC</name>
    <name type="ordered locus">RP740</name>
</gene>
<dbReference type="EMBL" id="Y11778">
    <property type="protein sequence ID" value="CAA72456.1"/>
    <property type="molecule type" value="Genomic_DNA"/>
</dbReference>
<dbReference type="EMBL" id="AJ235273">
    <property type="protein sequence ID" value="CAA15168.1"/>
    <property type="molecule type" value="Genomic_DNA"/>
</dbReference>
<dbReference type="PIR" id="H71633">
    <property type="entry name" value="H71633"/>
</dbReference>
<dbReference type="RefSeq" id="NP_221092.1">
    <property type="nucleotide sequence ID" value="NC_000963.1"/>
</dbReference>
<dbReference type="RefSeq" id="WP_004599630.1">
    <property type="nucleotide sequence ID" value="NC_000963.1"/>
</dbReference>
<dbReference type="SMR" id="O05961"/>
<dbReference type="STRING" id="272947.gene:17555810"/>
<dbReference type="EnsemblBacteria" id="CAA15168">
    <property type="protein sequence ID" value="CAA15168"/>
    <property type="gene ID" value="CAA15168"/>
</dbReference>
<dbReference type="GeneID" id="57569861"/>
<dbReference type="KEGG" id="rpr:RP740"/>
<dbReference type="PATRIC" id="fig|272947.5.peg.773"/>
<dbReference type="eggNOG" id="COG1253">
    <property type="taxonomic scope" value="Bacteria"/>
</dbReference>
<dbReference type="HOGENOM" id="CLU_015237_3_1_5"/>
<dbReference type="OrthoDB" id="9805314at2"/>
<dbReference type="Proteomes" id="UP000002480">
    <property type="component" value="Chromosome"/>
</dbReference>
<dbReference type="GO" id="GO:0050660">
    <property type="term" value="F:flavin adenine dinucleotide binding"/>
    <property type="evidence" value="ECO:0007669"/>
    <property type="project" value="InterPro"/>
</dbReference>
<dbReference type="GO" id="GO:0090729">
    <property type="term" value="F:toxin activity"/>
    <property type="evidence" value="ECO:0007669"/>
    <property type="project" value="UniProtKB-KW"/>
</dbReference>
<dbReference type="GO" id="GO:0031640">
    <property type="term" value="P:killing of cells of another organism"/>
    <property type="evidence" value="ECO:0007669"/>
    <property type="project" value="UniProtKB-KW"/>
</dbReference>
<dbReference type="CDD" id="cd04590">
    <property type="entry name" value="CBS_pair_CorC_HlyC_assoc"/>
    <property type="match status" value="1"/>
</dbReference>
<dbReference type="FunFam" id="3.10.580.10:FF:000002">
    <property type="entry name" value="Magnesium/cobalt efflux protein CorC"/>
    <property type="match status" value="1"/>
</dbReference>
<dbReference type="Gene3D" id="3.30.465.10">
    <property type="match status" value="1"/>
</dbReference>
<dbReference type="Gene3D" id="3.10.580.10">
    <property type="entry name" value="CBS-domain"/>
    <property type="match status" value="1"/>
</dbReference>
<dbReference type="InterPro" id="IPR000644">
    <property type="entry name" value="CBS_dom"/>
</dbReference>
<dbReference type="InterPro" id="IPR046342">
    <property type="entry name" value="CBS_dom_sf"/>
</dbReference>
<dbReference type="InterPro" id="IPR036318">
    <property type="entry name" value="FAD-bd_PCMH-like_sf"/>
</dbReference>
<dbReference type="InterPro" id="IPR016169">
    <property type="entry name" value="FAD-bd_PCMH_sub2"/>
</dbReference>
<dbReference type="InterPro" id="IPR044751">
    <property type="entry name" value="Ion_transp-like_CBS"/>
</dbReference>
<dbReference type="InterPro" id="IPR005170">
    <property type="entry name" value="Transptr-assoc_dom"/>
</dbReference>
<dbReference type="InterPro" id="IPR051676">
    <property type="entry name" value="UPF0053_domain"/>
</dbReference>
<dbReference type="PANTHER" id="PTHR43099:SF5">
    <property type="entry name" value="HLYC_CORC FAMILY TRANSPORTER"/>
    <property type="match status" value="1"/>
</dbReference>
<dbReference type="PANTHER" id="PTHR43099">
    <property type="entry name" value="UPF0053 PROTEIN YRKA"/>
    <property type="match status" value="1"/>
</dbReference>
<dbReference type="Pfam" id="PF00571">
    <property type="entry name" value="CBS"/>
    <property type="match status" value="2"/>
</dbReference>
<dbReference type="Pfam" id="PF03471">
    <property type="entry name" value="CorC_HlyC"/>
    <property type="match status" value="1"/>
</dbReference>
<dbReference type="SMART" id="SM01091">
    <property type="entry name" value="CorC_HlyC"/>
    <property type="match status" value="1"/>
</dbReference>
<dbReference type="SUPFAM" id="SSF54631">
    <property type="entry name" value="CBS-domain pair"/>
    <property type="match status" value="1"/>
</dbReference>
<dbReference type="SUPFAM" id="SSF56176">
    <property type="entry name" value="FAD-binding/transporter-associated domain-like"/>
    <property type="match status" value="1"/>
</dbReference>
<dbReference type="PROSITE" id="PS51371">
    <property type="entry name" value="CBS"/>
    <property type="match status" value="2"/>
</dbReference>
<name>HLYC_RICPR</name>